<dbReference type="EMBL" id="CP001359">
    <property type="protein sequence ID" value="ACL67490.1"/>
    <property type="molecule type" value="Genomic_DNA"/>
</dbReference>
<dbReference type="RefSeq" id="WP_015935207.1">
    <property type="nucleotide sequence ID" value="NC_011891.1"/>
</dbReference>
<dbReference type="SMR" id="B8JAJ1"/>
<dbReference type="KEGG" id="acp:A2cp1_4173"/>
<dbReference type="HOGENOM" id="CLU_128074_1_0_7"/>
<dbReference type="Proteomes" id="UP000007089">
    <property type="component" value="Chromosome"/>
</dbReference>
<dbReference type="Gene3D" id="2.60.40.1470">
    <property type="entry name" value="ApaG domain"/>
    <property type="match status" value="1"/>
</dbReference>
<dbReference type="HAMAP" id="MF_00791">
    <property type="entry name" value="ApaG"/>
    <property type="match status" value="1"/>
</dbReference>
<dbReference type="InterPro" id="IPR050718">
    <property type="entry name" value="ApaG-like"/>
</dbReference>
<dbReference type="InterPro" id="IPR007474">
    <property type="entry name" value="ApaG_domain"/>
</dbReference>
<dbReference type="InterPro" id="IPR036767">
    <property type="entry name" value="ApaG_sf"/>
</dbReference>
<dbReference type="InterPro" id="IPR023065">
    <property type="entry name" value="Uncharacterised_ApaG"/>
</dbReference>
<dbReference type="NCBIfam" id="NF003967">
    <property type="entry name" value="PRK05461.1"/>
    <property type="match status" value="1"/>
</dbReference>
<dbReference type="PANTHER" id="PTHR47191">
    <property type="entry name" value="OS05G0170800 PROTEIN"/>
    <property type="match status" value="1"/>
</dbReference>
<dbReference type="PANTHER" id="PTHR47191:SF2">
    <property type="entry name" value="OS05G0170800 PROTEIN"/>
    <property type="match status" value="1"/>
</dbReference>
<dbReference type="Pfam" id="PF04379">
    <property type="entry name" value="DUF525"/>
    <property type="match status" value="1"/>
</dbReference>
<dbReference type="SUPFAM" id="SSF110069">
    <property type="entry name" value="ApaG-like"/>
    <property type="match status" value="1"/>
</dbReference>
<dbReference type="PROSITE" id="PS51087">
    <property type="entry name" value="APAG"/>
    <property type="match status" value="1"/>
</dbReference>
<protein>
    <recommendedName>
        <fullName evidence="1">Protein ApaG</fullName>
    </recommendedName>
</protein>
<reference key="1">
    <citation type="submission" date="2009-01" db="EMBL/GenBank/DDBJ databases">
        <title>Complete sequence of Anaeromyxobacter dehalogenans 2CP-1.</title>
        <authorList>
            <person name="Lucas S."/>
            <person name="Copeland A."/>
            <person name="Lapidus A."/>
            <person name="Glavina del Rio T."/>
            <person name="Dalin E."/>
            <person name="Tice H."/>
            <person name="Bruce D."/>
            <person name="Goodwin L."/>
            <person name="Pitluck S."/>
            <person name="Saunders E."/>
            <person name="Brettin T."/>
            <person name="Detter J.C."/>
            <person name="Han C."/>
            <person name="Larimer F."/>
            <person name="Land M."/>
            <person name="Hauser L."/>
            <person name="Kyrpides N."/>
            <person name="Ovchinnikova G."/>
            <person name="Beliaev A.S."/>
            <person name="Richardson P."/>
        </authorList>
    </citation>
    <scope>NUCLEOTIDE SEQUENCE [LARGE SCALE GENOMIC DNA]</scope>
    <source>
        <strain>2CP-1 / ATCC BAA-258</strain>
    </source>
</reference>
<proteinExistence type="inferred from homology"/>
<feature type="chain" id="PRO_1000148494" description="Protein ApaG">
    <location>
        <begin position="1"/>
        <end position="125"/>
    </location>
</feature>
<feature type="domain" description="ApaG" evidence="1">
    <location>
        <begin position="3"/>
        <end position="125"/>
    </location>
</feature>
<name>APAG_ANAD2</name>
<accession>B8JAJ1</accession>
<evidence type="ECO:0000255" key="1">
    <source>
        <dbReference type="HAMAP-Rule" id="MF_00791"/>
    </source>
</evidence>
<sequence length="125" mass="13839">MSTAVTEGIEVTVRSTFRPERSEPGRFLFSYTVRIANQGEVPAQLVSRRWIILDASGEREEVVGDGVVGQQPHLEPGEHFEYTSFCVLKTPHGSMRGTYRMVRDDGQAFDATIAPFPLVVPGSLN</sequence>
<gene>
    <name evidence="1" type="primary">apaG</name>
    <name type="ordered locus">A2cp1_4173</name>
</gene>
<organism>
    <name type="scientific">Anaeromyxobacter dehalogenans (strain 2CP-1 / ATCC BAA-258)</name>
    <dbReference type="NCBI Taxonomy" id="455488"/>
    <lineage>
        <taxon>Bacteria</taxon>
        <taxon>Pseudomonadati</taxon>
        <taxon>Myxococcota</taxon>
        <taxon>Myxococcia</taxon>
        <taxon>Myxococcales</taxon>
        <taxon>Cystobacterineae</taxon>
        <taxon>Anaeromyxobacteraceae</taxon>
        <taxon>Anaeromyxobacter</taxon>
    </lineage>
</organism>